<organism>
    <name type="scientific">Rhodospirillum rubrum (strain ATCC 11170 / ATH 1.1.1 / DSM 467 / LMG 4362 / NCIMB 8255 / S1)</name>
    <dbReference type="NCBI Taxonomy" id="269796"/>
    <lineage>
        <taxon>Bacteria</taxon>
        <taxon>Pseudomonadati</taxon>
        <taxon>Pseudomonadota</taxon>
        <taxon>Alphaproteobacteria</taxon>
        <taxon>Rhodospirillales</taxon>
        <taxon>Rhodospirillaceae</taxon>
        <taxon>Rhodospirillum</taxon>
    </lineage>
</organism>
<protein>
    <recommendedName>
        <fullName evidence="1">Putative pre-16S rRNA nuclease</fullName>
        <ecNumber evidence="1">3.1.-.-</ecNumber>
    </recommendedName>
</protein>
<dbReference type="EC" id="3.1.-.-" evidence="1"/>
<dbReference type="EMBL" id="CP000230">
    <property type="protein sequence ID" value="ABC23973.1"/>
    <property type="molecule type" value="Genomic_DNA"/>
</dbReference>
<dbReference type="RefSeq" id="YP_428260.1">
    <property type="nucleotide sequence ID" value="NC_007643.1"/>
</dbReference>
<dbReference type="SMR" id="Q2RPH2"/>
<dbReference type="STRING" id="269796.Rru_A3178"/>
<dbReference type="EnsemblBacteria" id="ABC23973">
    <property type="protein sequence ID" value="ABC23973"/>
    <property type="gene ID" value="Rru_A3178"/>
</dbReference>
<dbReference type="KEGG" id="rru:Rru_A3178"/>
<dbReference type="PATRIC" id="fig|269796.9.peg.3291"/>
<dbReference type="eggNOG" id="COG0816">
    <property type="taxonomic scope" value="Bacteria"/>
</dbReference>
<dbReference type="HOGENOM" id="CLU_098240_1_1_5"/>
<dbReference type="PhylomeDB" id="Q2RPH2"/>
<dbReference type="Proteomes" id="UP000001929">
    <property type="component" value="Chromosome"/>
</dbReference>
<dbReference type="GO" id="GO:0005829">
    <property type="term" value="C:cytosol"/>
    <property type="evidence" value="ECO:0007669"/>
    <property type="project" value="TreeGrafter"/>
</dbReference>
<dbReference type="GO" id="GO:0004518">
    <property type="term" value="F:nuclease activity"/>
    <property type="evidence" value="ECO:0007669"/>
    <property type="project" value="UniProtKB-KW"/>
</dbReference>
<dbReference type="GO" id="GO:0000967">
    <property type="term" value="P:rRNA 5'-end processing"/>
    <property type="evidence" value="ECO:0007669"/>
    <property type="project" value="UniProtKB-UniRule"/>
</dbReference>
<dbReference type="CDD" id="cd16964">
    <property type="entry name" value="YqgF"/>
    <property type="match status" value="1"/>
</dbReference>
<dbReference type="Gene3D" id="3.30.420.140">
    <property type="entry name" value="YqgF/RNase H-like domain"/>
    <property type="match status" value="1"/>
</dbReference>
<dbReference type="HAMAP" id="MF_00651">
    <property type="entry name" value="Nuclease_YqgF"/>
    <property type="match status" value="1"/>
</dbReference>
<dbReference type="InterPro" id="IPR012337">
    <property type="entry name" value="RNaseH-like_sf"/>
</dbReference>
<dbReference type="InterPro" id="IPR005227">
    <property type="entry name" value="YqgF"/>
</dbReference>
<dbReference type="InterPro" id="IPR006641">
    <property type="entry name" value="YqgF/RNaseH-like_dom"/>
</dbReference>
<dbReference type="InterPro" id="IPR037027">
    <property type="entry name" value="YqgF/RNaseH-like_dom_sf"/>
</dbReference>
<dbReference type="NCBIfam" id="TIGR00250">
    <property type="entry name" value="RNAse_H_YqgF"/>
    <property type="match status" value="1"/>
</dbReference>
<dbReference type="PANTHER" id="PTHR33317">
    <property type="entry name" value="POLYNUCLEOTIDYL TRANSFERASE, RIBONUCLEASE H-LIKE SUPERFAMILY PROTEIN"/>
    <property type="match status" value="1"/>
</dbReference>
<dbReference type="PANTHER" id="PTHR33317:SF4">
    <property type="entry name" value="POLYNUCLEOTIDYL TRANSFERASE, RIBONUCLEASE H-LIKE SUPERFAMILY PROTEIN"/>
    <property type="match status" value="1"/>
</dbReference>
<dbReference type="Pfam" id="PF03652">
    <property type="entry name" value="RuvX"/>
    <property type="match status" value="1"/>
</dbReference>
<dbReference type="SMART" id="SM00732">
    <property type="entry name" value="YqgFc"/>
    <property type="match status" value="1"/>
</dbReference>
<dbReference type="SUPFAM" id="SSF53098">
    <property type="entry name" value="Ribonuclease H-like"/>
    <property type="match status" value="1"/>
</dbReference>
<evidence type="ECO:0000255" key="1">
    <source>
        <dbReference type="HAMAP-Rule" id="MF_00651"/>
    </source>
</evidence>
<sequence length="161" mass="17424">MPICSLQTFADALPPGRPVLGLDLGTRTIGVATSDVRLTLATPIITIKRRKFTLDVQELFALADGRAAAGLVLGLPVEMDGSEGPRCQATRAFARNLLALRDLPVLLWDERLSTAAVNRFLVGEADMTRARRAEVVDRAAAAYILQGALDALDRQRPEQAF</sequence>
<comment type="function">
    <text evidence="1">Could be a nuclease involved in processing of the 5'-end of pre-16S rRNA.</text>
</comment>
<comment type="subcellular location">
    <subcellularLocation>
        <location evidence="1">Cytoplasm</location>
    </subcellularLocation>
</comment>
<comment type="similarity">
    <text evidence="1">Belongs to the YqgF nuclease family.</text>
</comment>
<gene>
    <name type="ordered locus">Rru_A3178</name>
</gene>
<proteinExistence type="inferred from homology"/>
<feature type="chain" id="PRO_0000257580" description="Putative pre-16S rRNA nuclease">
    <location>
        <begin position="1"/>
        <end position="161"/>
    </location>
</feature>
<name>YQGF_RHORT</name>
<reference key="1">
    <citation type="journal article" date="2011" name="Stand. Genomic Sci.">
        <title>Complete genome sequence of Rhodospirillum rubrum type strain (S1).</title>
        <authorList>
            <person name="Munk A.C."/>
            <person name="Copeland A."/>
            <person name="Lucas S."/>
            <person name="Lapidus A."/>
            <person name="Del Rio T.G."/>
            <person name="Barry K."/>
            <person name="Detter J.C."/>
            <person name="Hammon N."/>
            <person name="Israni S."/>
            <person name="Pitluck S."/>
            <person name="Brettin T."/>
            <person name="Bruce D."/>
            <person name="Han C."/>
            <person name="Tapia R."/>
            <person name="Gilna P."/>
            <person name="Schmutz J."/>
            <person name="Larimer F."/>
            <person name="Land M."/>
            <person name="Kyrpides N.C."/>
            <person name="Mavromatis K."/>
            <person name="Richardson P."/>
            <person name="Rohde M."/>
            <person name="Goeker M."/>
            <person name="Klenk H.P."/>
            <person name="Zhang Y."/>
            <person name="Roberts G.P."/>
            <person name="Reslewic S."/>
            <person name="Schwartz D.C."/>
        </authorList>
    </citation>
    <scope>NUCLEOTIDE SEQUENCE [LARGE SCALE GENOMIC DNA]</scope>
    <source>
        <strain>ATCC 11170 / ATH 1.1.1 / DSM 467 / LMG 4362 / NCIMB 8255 / S1</strain>
    </source>
</reference>
<accession>Q2RPH2</accession>
<keyword id="KW-0963">Cytoplasm</keyword>
<keyword id="KW-0378">Hydrolase</keyword>
<keyword id="KW-0540">Nuclease</keyword>
<keyword id="KW-1185">Reference proteome</keyword>
<keyword id="KW-0690">Ribosome biogenesis</keyword>